<dbReference type="EMBL" id="AE017194">
    <property type="protein sequence ID" value="AAS42586.1"/>
    <property type="molecule type" value="Genomic_DNA"/>
</dbReference>
<dbReference type="SMR" id="Q733H7"/>
<dbReference type="KEGG" id="bca:BCE_3681"/>
<dbReference type="HOGENOM" id="CLU_148478_0_0_9"/>
<dbReference type="Proteomes" id="UP000002527">
    <property type="component" value="Chromosome"/>
</dbReference>
<dbReference type="GO" id="GO:0003729">
    <property type="term" value="F:mRNA binding"/>
    <property type="evidence" value="ECO:0007669"/>
    <property type="project" value="UniProtKB-UniRule"/>
</dbReference>
<dbReference type="GO" id="GO:0006547">
    <property type="term" value="P:L-histidine metabolic process"/>
    <property type="evidence" value="ECO:0007669"/>
    <property type="project" value="UniProtKB-UniRule"/>
</dbReference>
<dbReference type="GO" id="GO:0010628">
    <property type="term" value="P:positive regulation of gene expression"/>
    <property type="evidence" value="ECO:0007669"/>
    <property type="project" value="UniProtKB-UniRule"/>
</dbReference>
<dbReference type="FunFam" id="3.40.1510.10:FF:000001">
    <property type="entry name" value="Hut operon positive regulatory protein"/>
    <property type="match status" value="1"/>
</dbReference>
<dbReference type="Gene3D" id="3.40.1510.10">
    <property type="entry name" value="Hut operon regulatory protein HutP"/>
    <property type="match status" value="1"/>
</dbReference>
<dbReference type="HAMAP" id="MF_00779">
    <property type="entry name" value="HutP"/>
    <property type="match status" value="1"/>
</dbReference>
<dbReference type="InterPro" id="IPR015111">
    <property type="entry name" value="Regulatory_HutP"/>
</dbReference>
<dbReference type="InterPro" id="IPR023552">
    <property type="entry name" value="Regulatory_HutP_bacillales"/>
</dbReference>
<dbReference type="InterPro" id="IPR036482">
    <property type="entry name" value="Regulatory_HutP_sf"/>
</dbReference>
<dbReference type="NCBIfam" id="NF002838">
    <property type="entry name" value="PRK03065.1"/>
    <property type="match status" value="1"/>
</dbReference>
<dbReference type="Pfam" id="PF09021">
    <property type="entry name" value="HutP"/>
    <property type="match status" value="1"/>
</dbReference>
<dbReference type="SUPFAM" id="SSF111064">
    <property type="entry name" value="Hut operon positive regulatory protein HutP"/>
    <property type="match status" value="1"/>
</dbReference>
<protein>
    <recommendedName>
        <fullName evidence="1">Hut operon positive regulatory protein</fullName>
    </recommendedName>
</protein>
<gene>
    <name evidence="1" type="primary">hutP</name>
    <name type="ordered locus">BCE_3681</name>
</gene>
<reference key="1">
    <citation type="journal article" date="2004" name="Nucleic Acids Res.">
        <title>The genome sequence of Bacillus cereus ATCC 10987 reveals metabolic adaptations and a large plasmid related to Bacillus anthracis pXO1.</title>
        <authorList>
            <person name="Rasko D.A."/>
            <person name="Ravel J."/>
            <person name="Oekstad O.A."/>
            <person name="Helgason E."/>
            <person name="Cer R.Z."/>
            <person name="Jiang L."/>
            <person name="Shores K.A."/>
            <person name="Fouts D.E."/>
            <person name="Tourasse N.J."/>
            <person name="Angiuoli S.V."/>
            <person name="Kolonay J.F."/>
            <person name="Nelson W.C."/>
            <person name="Kolstoe A.-B."/>
            <person name="Fraser C.M."/>
            <person name="Read T.D."/>
        </authorList>
    </citation>
    <scope>NUCLEOTIDE SEQUENCE [LARGE SCALE GENOMIC DNA]</scope>
    <source>
        <strain>ATCC 10987 / NRS 248</strain>
    </source>
</reference>
<accession>Q733H7</accession>
<organism>
    <name type="scientific">Bacillus cereus (strain ATCC 10987 / NRS 248)</name>
    <dbReference type="NCBI Taxonomy" id="222523"/>
    <lineage>
        <taxon>Bacteria</taxon>
        <taxon>Bacillati</taxon>
        <taxon>Bacillota</taxon>
        <taxon>Bacilli</taxon>
        <taxon>Bacillales</taxon>
        <taxon>Bacillaceae</taxon>
        <taxon>Bacillus</taxon>
        <taxon>Bacillus cereus group</taxon>
    </lineage>
</organism>
<evidence type="ECO:0000255" key="1">
    <source>
        <dbReference type="HAMAP-Rule" id="MF_00779"/>
    </source>
</evidence>
<comment type="function">
    <text evidence="1">Antiterminator that binds to cis-acting regulatory sequences on the mRNA in the presence of histidine, thereby suppressing transcription termination and activating the hut operon for histidine utilization.</text>
</comment>
<comment type="subunit">
    <text evidence="1">Homohexamer.</text>
</comment>
<comment type="similarity">
    <text evidence="1">Belongs to the HutP family.</text>
</comment>
<keyword id="KW-0010">Activator</keyword>
<keyword id="KW-0369">Histidine metabolism</keyword>
<keyword id="KW-0694">RNA-binding</keyword>
<keyword id="KW-0804">Transcription</keyword>
<keyword id="KW-0805">Transcription regulation</keyword>
<sequence length="146" mass="15822">MLLQGTHRIGRMAMLLALADENESPVLSIPKGWKYCTGKVGSMNSQKVVAAMETAAKSNQVIETDVYRETHALYHAIMEALYGVTRGQIQLADVLRTVGLRFAIVRGTPYDGKKEGEWVAVALYGTIGAPVKGSEHEAIGLGINHI</sequence>
<feature type="chain" id="PRO_1000046821" description="Hut operon positive regulatory protein">
    <location>
        <begin position="1"/>
        <end position="146"/>
    </location>
</feature>
<name>HUTP_BACC1</name>
<proteinExistence type="inferred from homology"/>